<organism>
    <name type="scientific">Bos taurus</name>
    <name type="common">Bovine</name>
    <dbReference type="NCBI Taxonomy" id="9913"/>
    <lineage>
        <taxon>Eukaryota</taxon>
        <taxon>Metazoa</taxon>
        <taxon>Chordata</taxon>
        <taxon>Craniata</taxon>
        <taxon>Vertebrata</taxon>
        <taxon>Euteleostomi</taxon>
        <taxon>Mammalia</taxon>
        <taxon>Eutheria</taxon>
        <taxon>Laurasiatheria</taxon>
        <taxon>Artiodactyla</taxon>
        <taxon>Ruminantia</taxon>
        <taxon>Pecora</taxon>
        <taxon>Bovidae</taxon>
        <taxon>Bovinae</taxon>
        <taxon>Bos</taxon>
    </lineage>
</organism>
<accession>Q28143</accession>
<accession>Q28144</accession>
<comment type="function">
    <text evidence="3 4">Neuronal cell surface protein that may be involved in cell recognition and cell adhesion. May mediate intracellular signaling (By similarity). Functions as part of a trans-synaptic complex by binding to cerebellins and postsynaptic GRID1. This interaction helps regulate the activity of NMDA and AMPA receptors at hippocampal synapses without affecting synapse formation. NRXN3B-CBLN2-GRID1 complex transduce presynaptic signals into postsynaptic AMPAR response (By similarity).</text>
</comment>
<comment type="subunit">
    <text evidence="2 3">Weakly interacts with CBLN1 and CBLN2 (By similarity). Very weak binding, if any, to CBLN4 (By similarity). Specific isoforms bind neuroligins NLGN1, NLGN2 and NLGN3 (By similarity). Interacts with CLSTN3 (By similarity).</text>
</comment>
<comment type="subcellular location">
    <molecule>Isoform 1</molecule>
    <subcellularLocation>
        <location evidence="11">Presynaptic cell membrane</location>
        <topology evidence="11">Single-pass type I membrane protein</topology>
    </subcellularLocation>
</comment>
<comment type="subcellular location">
    <molecule>Isoform 2</molecule>
    <subcellularLocation>
        <location evidence="11">Presynaptic cell membrane</location>
        <topology evidence="11">Single-pass type I membrane protein</topology>
    </subcellularLocation>
</comment>
<comment type="subcellular location">
    <molecule>Isoform 3</molecule>
    <subcellularLocation>
        <location evidence="11">Secreted</location>
    </subcellularLocation>
</comment>
<comment type="subcellular location">
    <molecule>Isoform 4</molecule>
    <subcellularLocation>
        <location evidence="11">Secreted</location>
    </subcellularLocation>
</comment>
<comment type="alternative products">
    <event type="alternative splicing"/>
    <isoform>
        <id>Q28143-1</id>
        <name>1</name>
        <sequence type="displayed"/>
    </isoform>
    <isoform>
        <id>Q28143-2</id>
        <name>2</name>
        <sequence type="described" ref="VSP_003533"/>
    </isoform>
    <isoform>
        <id>Q28143-3</id>
        <name>3</name>
        <sequence type="described" ref="VSP_003534"/>
    </isoform>
    <isoform>
        <id>Q28143-4</id>
        <name>4</name>
        <sequence type="described" ref="VSP_003533 VSP_003534"/>
    </isoform>
    <text>Additional isoforms seem to exist. There is a combination of two alternatively spliced domains at sites 4 and 5, which seem to be used independently. Experimental confirmation may be lacking for some isoforms.</text>
</comment>
<comment type="PTM">
    <text evidence="5">Processed by alpha-secretase leading to the formation of an extracellular soluble protein as well as a C-terminal membrane-embedded fragment (CTF). Proteolysis of these CTFs by gamma-secretase releases intracellular domains (ICDs) and extracellular peptides (By similarity).</text>
</comment>
<comment type="PTM">
    <text evidence="3">O-glycosylated; contains heparan sulfate. Heparan sulfate attachment is required for synapse development by mediating interactions with neuroligins.</text>
</comment>
<comment type="miscellaneous">
    <molecule>Isoform 3</molecule>
    <text evidence="11">Lacks the transmembrane domain.</text>
</comment>
<comment type="miscellaneous">
    <molecule>Isoform 4</molecule>
    <text evidence="11">Lacks the transmembrane domain.</text>
</comment>
<comment type="similarity">
    <text evidence="11">Belongs to the neurexin family.</text>
</comment>
<evidence type="ECO:0000250" key="1">
    <source>
        <dbReference type="UniProtKB" id="Q63373"/>
    </source>
</evidence>
<evidence type="ECO:0000250" key="2">
    <source>
        <dbReference type="UniProtKB" id="Q63376"/>
    </source>
</evidence>
<evidence type="ECO:0000250" key="3">
    <source>
        <dbReference type="UniProtKB" id="Q8C985"/>
    </source>
</evidence>
<evidence type="ECO:0000250" key="4">
    <source>
        <dbReference type="UniProtKB" id="Q9CS84"/>
    </source>
</evidence>
<evidence type="ECO:0000250" key="5">
    <source>
        <dbReference type="UniProtKB" id="Q9HDB5"/>
    </source>
</evidence>
<evidence type="ECO:0000255" key="6"/>
<evidence type="ECO:0000255" key="7">
    <source>
        <dbReference type="PROSITE-ProRule" id="PRU00122"/>
    </source>
</evidence>
<evidence type="ECO:0000256" key="8">
    <source>
        <dbReference type="SAM" id="MobiDB-lite"/>
    </source>
</evidence>
<evidence type="ECO:0000269" key="9">
    <source>
    </source>
</evidence>
<evidence type="ECO:0000303" key="10">
    <source>
    </source>
</evidence>
<evidence type="ECO:0000305" key="11"/>
<dbReference type="EMBL" id="L27869">
    <property type="protein sequence ID" value="AAA19907.1"/>
    <property type="molecule type" value="mRNA"/>
</dbReference>
<dbReference type="EMBL" id="L27869">
    <property type="protein sequence ID" value="AAA19908.1"/>
    <property type="molecule type" value="mRNA"/>
</dbReference>
<dbReference type="PIR" id="A53580">
    <property type="entry name" value="A53580"/>
</dbReference>
<dbReference type="PIR" id="B53580">
    <property type="entry name" value="B53580"/>
</dbReference>
<dbReference type="RefSeq" id="XP_024853581.1">
    <molecule id="Q28143-1"/>
    <property type="nucleotide sequence ID" value="XM_024997813.2"/>
</dbReference>
<dbReference type="RefSeq" id="XP_024853584.1">
    <molecule id="Q28143-2"/>
    <property type="nucleotide sequence ID" value="XM_024997816.2"/>
</dbReference>
<dbReference type="SMR" id="Q28143"/>
<dbReference type="FunCoup" id="Q28143">
    <property type="interactions" value="42"/>
</dbReference>
<dbReference type="STRING" id="9913.ENSBTAP00000052163"/>
<dbReference type="GlyCosmos" id="Q28143">
    <property type="glycosylation" value="3 sites, No reported glycans"/>
</dbReference>
<dbReference type="GlyGen" id="Q28143">
    <property type="glycosylation" value="4 sites"/>
</dbReference>
<dbReference type="GeneID" id="614412"/>
<dbReference type="VEuPathDB" id="HostDB:ENSBTAG00000025324"/>
<dbReference type="InParanoid" id="Q28143"/>
<dbReference type="Proteomes" id="UP000009136">
    <property type="component" value="Chromosome 10"/>
</dbReference>
<dbReference type="Bgee" id="ENSBTAG00000025324">
    <property type="expression patterns" value="Expressed in prefrontal cortex and 23 other cell types or tissues"/>
</dbReference>
<dbReference type="GO" id="GO:0042995">
    <property type="term" value="C:cell projection"/>
    <property type="evidence" value="ECO:0007669"/>
    <property type="project" value="UniProtKB-KW"/>
</dbReference>
<dbReference type="GO" id="GO:0005576">
    <property type="term" value="C:extracellular region"/>
    <property type="evidence" value="ECO:0007669"/>
    <property type="project" value="UniProtKB-SubCell"/>
</dbReference>
<dbReference type="GO" id="GO:0005886">
    <property type="term" value="C:plasma membrane"/>
    <property type="evidence" value="ECO:0000304"/>
    <property type="project" value="Reactome"/>
</dbReference>
<dbReference type="GO" id="GO:0042734">
    <property type="term" value="C:presynaptic membrane"/>
    <property type="evidence" value="ECO:0007669"/>
    <property type="project" value="UniProtKB-SubCell"/>
</dbReference>
<dbReference type="GO" id="GO:0046872">
    <property type="term" value="F:metal ion binding"/>
    <property type="evidence" value="ECO:0007669"/>
    <property type="project" value="UniProtKB-KW"/>
</dbReference>
<dbReference type="GO" id="GO:0001525">
    <property type="term" value="P:angiogenesis"/>
    <property type="evidence" value="ECO:0000250"/>
    <property type="project" value="UniProtKB"/>
</dbReference>
<dbReference type="GO" id="GO:0007155">
    <property type="term" value="P:cell adhesion"/>
    <property type="evidence" value="ECO:0007669"/>
    <property type="project" value="UniProtKB-KW"/>
</dbReference>
<dbReference type="CDD" id="cd00110">
    <property type="entry name" value="LamG"/>
    <property type="match status" value="1"/>
</dbReference>
<dbReference type="FunFam" id="2.60.120.200:FF:000003">
    <property type="entry name" value="neurexin-1 isoform X1"/>
    <property type="match status" value="1"/>
</dbReference>
<dbReference type="Gene3D" id="2.60.120.200">
    <property type="match status" value="1"/>
</dbReference>
<dbReference type="InterPro" id="IPR013320">
    <property type="entry name" value="ConA-like_dom_sf"/>
</dbReference>
<dbReference type="InterPro" id="IPR001791">
    <property type="entry name" value="Laminin_G"/>
</dbReference>
<dbReference type="InterPro" id="IPR003585">
    <property type="entry name" value="Neurexin-like"/>
</dbReference>
<dbReference type="InterPro" id="IPR050372">
    <property type="entry name" value="Neurexin-related_CASP"/>
</dbReference>
<dbReference type="InterPro" id="IPR027789">
    <property type="entry name" value="Syndecan/Neurexin_dom"/>
</dbReference>
<dbReference type="PANTHER" id="PTHR15036:SF57">
    <property type="entry name" value="NEUREXIN-3"/>
    <property type="match status" value="1"/>
</dbReference>
<dbReference type="PANTHER" id="PTHR15036">
    <property type="entry name" value="PIKACHURIN-LIKE PROTEIN"/>
    <property type="match status" value="1"/>
</dbReference>
<dbReference type="Pfam" id="PF02210">
    <property type="entry name" value="Laminin_G_2"/>
    <property type="match status" value="1"/>
</dbReference>
<dbReference type="Pfam" id="PF01034">
    <property type="entry name" value="Syndecan"/>
    <property type="match status" value="1"/>
</dbReference>
<dbReference type="SMART" id="SM00294">
    <property type="entry name" value="4.1m"/>
    <property type="match status" value="1"/>
</dbReference>
<dbReference type="SMART" id="SM00282">
    <property type="entry name" value="LamG"/>
    <property type="match status" value="1"/>
</dbReference>
<dbReference type="SUPFAM" id="SSF49899">
    <property type="entry name" value="Concanavalin A-like lectins/glucanases"/>
    <property type="match status" value="1"/>
</dbReference>
<dbReference type="PROSITE" id="PS50025">
    <property type="entry name" value="LAM_G_DOMAIN"/>
    <property type="match status" value="1"/>
</dbReference>
<reference key="1">
    <citation type="journal article" date="1994" name="J. Biol. Chem.">
        <title>Conserved domain structure of beta-neurexins. Unusual cleaved signal sequences in receptor-like neuronal cell-surface proteins.</title>
        <authorList>
            <person name="Ushkaryov Y.A."/>
            <person name="Hata Y."/>
            <person name="Ichtchenko K."/>
            <person name="Moomaw C."/>
            <person name="Afendis S."/>
            <person name="Slaughter C.A."/>
            <person name="Suedhof T.C."/>
        </authorList>
    </citation>
    <scope>NUCLEOTIDE SEQUENCE [MRNA] (ISOFORMS 1; 2; 3 AND 4)</scope>
    <scope>PROTEIN SEQUENCE OF N-TERMINUS</scope>
    <source>
        <tissue>Brain</tissue>
    </source>
</reference>
<keyword id="KW-0025">Alternative splicing</keyword>
<keyword id="KW-0037">Angiogenesis</keyword>
<keyword id="KW-0106">Calcium</keyword>
<keyword id="KW-0130">Cell adhesion</keyword>
<keyword id="KW-1003">Cell membrane</keyword>
<keyword id="KW-0966">Cell projection</keyword>
<keyword id="KW-0903">Direct protein sequencing</keyword>
<keyword id="KW-0325">Glycoprotein</keyword>
<keyword id="KW-0357">Heparan sulfate</keyword>
<keyword id="KW-0472">Membrane</keyword>
<keyword id="KW-0479">Metal-binding</keyword>
<keyword id="KW-0654">Proteoglycan</keyword>
<keyword id="KW-1185">Reference proteome</keyword>
<keyword id="KW-0677">Repeat</keyword>
<keyword id="KW-0964">Secreted</keyword>
<keyword id="KW-0732">Signal</keyword>
<keyword id="KW-0770">Synapse</keyword>
<keyword id="KW-0812">Transmembrane</keyword>
<keyword id="KW-1133">Transmembrane helix</keyword>
<feature type="signal peptide" evidence="9">
    <location>
        <begin position="1"/>
        <end position="35"/>
    </location>
</feature>
<feature type="chain" id="PRO_0000019501" description="Neurexin-3-beta">
    <location>
        <begin position="36"/>
        <end position="456"/>
    </location>
</feature>
<feature type="chain" id="PRO_0000412541" description="Neurexin-3-beta, soluble form" evidence="5">
    <location>
        <begin position="36"/>
        <end position="369"/>
    </location>
</feature>
<feature type="chain" id="PRO_0000412542" description="Neurexin-3-beta, C-terminal fragment" evidence="5">
    <location>
        <begin position="370"/>
        <end position="456"/>
    </location>
</feature>
<feature type="topological domain" description="Extracellular" evidence="6">
    <location>
        <begin position="36"/>
        <end position="381"/>
    </location>
</feature>
<feature type="transmembrane region" description="Helical" evidence="6">
    <location>
        <begin position="382"/>
        <end position="402"/>
    </location>
</feature>
<feature type="topological domain" description="Cytoplasmic" evidence="6">
    <location>
        <begin position="403"/>
        <end position="456"/>
    </location>
</feature>
<feature type="domain" description="Laminin G-like" evidence="7">
    <location>
        <begin position="82"/>
        <end position="282"/>
    </location>
</feature>
<feature type="region of interest" description="Disordered" evidence="8">
    <location>
        <begin position="41"/>
        <end position="63"/>
    </location>
</feature>
<feature type="region of interest" description="Disordered" evidence="8">
    <location>
        <begin position="316"/>
        <end position="340"/>
    </location>
</feature>
<feature type="region of interest" description="Disordered" evidence="8">
    <location>
        <begin position="424"/>
        <end position="456"/>
    </location>
</feature>
<feature type="compositionally biased region" description="Basic residues" evidence="8">
    <location>
        <begin position="52"/>
        <end position="63"/>
    </location>
</feature>
<feature type="compositionally biased region" description="Polar residues" evidence="8">
    <location>
        <begin position="325"/>
        <end position="340"/>
    </location>
</feature>
<feature type="binding site" evidence="1">
    <location>
        <position position="134"/>
    </location>
    <ligand>
        <name>Ca(2+)</name>
        <dbReference type="ChEBI" id="CHEBI:29108"/>
    </ligand>
</feature>
<feature type="binding site" evidence="1">
    <location>
        <position position="151"/>
    </location>
    <ligand>
        <name>Ca(2+)</name>
        <dbReference type="ChEBI" id="CHEBI:29108"/>
    </ligand>
</feature>
<feature type="binding site" evidence="1">
    <location>
        <position position="233"/>
    </location>
    <ligand>
        <name>Ca(2+)</name>
        <dbReference type="ChEBI" id="CHEBI:29108"/>
    </ligand>
</feature>
<feature type="binding site" evidence="1">
    <location>
        <position position="235"/>
    </location>
    <ligand>
        <name>Ca(2+)</name>
        <dbReference type="ChEBI" id="CHEBI:29108"/>
    </ligand>
</feature>
<feature type="glycosylation site" description="N-linked (GlcNAc...) asparagine" evidence="6">
    <location>
        <position position="181"/>
    </location>
</feature>
<feature type="glycosylation site" description="N-linked (GlcNAc...) asparagine" evidence="6">
    <location>
        <position position="279"/>
    </location>
</feature>
<feature type="glycosylation site" description="N-linked (GlcNAc...) asparagine" evidence="6">
    <location>
        <position position="323"/>
    </location>
</feature>
<feature type="glycosylation site" description="O-linked (Xyl...) (heparan sulfate) serine" evidence="3">
    <location>
        <position position="339"/>
    </location>
</feature>
<feature type="splice variant" id="VSP_003533" description="In isoform 2 and isoform 4." evidence="10">
    <location>
        <begin position="198"/>
        <end position="227"/>
    </location>
</feature>
<feature type="splice variant" id="VSP_003534" description="In isoform 3 and isoform 4." evidence="10">
    <original>ANPTEPGVRRVPGASEVIRESSSTTGMVVGIVAAAALCILILLYAMYKYRNRDEGSYQVDETRNYISNSAQSNGTLLKEKPPSSKGGHKKQKNKDKEYYV</original>
    <variation>ARSSNAARSLRAALTWTWRLTYTFTPIIFISCVVHS</variation>
    <location>
        <begin position="357"/>
        <end position="456"/>
    </location>
</feature>
<proteinExistence type="evidence at protein level"/>
<gene>
    <name type="primary">NRXN3</name>
</gene>
<protein>
    <recommendedName>
        <fullName>Neurexin-3-beta</fullName>
    </recommendedName>
    <alternativeName>
        <fullName>Neurexin III-beta</fullName>
    </alternativeName>
    <component>
        <recommendedName>
            <fullName evidence="5">Neurexin-3-beta, soluble form</fullName>
        </recommendedName>
    </component>
    <component>
        <recommendedName>
            <fullName evidence="5">Neurexin-3-beta, C-terminal fragment</fullName>
            <shortName>NRXN3-CTF</shortName>
        </recommendedName>
    </component>
</protein>
<name>NRX3B_BOVIN</name>
<sequence length="456" mass="50244">MHLRIHARRNPPRRPAWTLGIWSLFWGCIVSSVWSSSNVASSSSSPGSHSQHEHHFHGSKHHSVPISIYRSPVSLRGGHAGATYIFGKSGGLILYTWPANDRPSTRSDRLAVGFSTTVKDGILVRIDSAPGLGDFLQLHIEQGKIGVVFNIGTVDISIKEERTPVNDGKYHVVRFTRNGGNATLQVDNWPVNEHYPTGNTDNERFQMVKQKIPFKYNRPVEEWLQEKGRQLTIFNTQAQIAIGGKDKGRLFQGQLSGLYYDGLKVLNMAAENNPNIKINGSVRLVGEVPSILGTTQTTSMPPEMSTTVMETTTTMATTTTRKNRSTASIQPTSDDLVSSAECSSDDEDFVECEPSTANPTEPGVRRVPGASEVIRESSSTTGMVVGIVAAAALCILILLYAMYKYRNRDEGSYQVDETRNYISNSAQSNGTLLKEKPPSSKGGHKKQKNKDKEYYV</sequence>